<sequence length="507" mass="58470">MQGATTLDAASPGPLALLGLLFAATLLLSALFLLTRRTRRPREPPLIKGWLPYLGMALKFFKDPLTFLKTLQRQHGDTFTVFLVGKYITFVLNPFQYQYVTKNPKQLSFQKFSSRLSAKAFSVKKLLTDDDLNEDVHRAYLLLQGKPLDALLETMIQEVKELFESQLLKITDWNTERIFAFCGSLVFEITFATLYGKILAGNKKQIISELRDDFFKFDDMFPYLVSDIPIQLLRNEESMQKKIIKCLTSEKVAQMQGQSKIVQERQDLLKRYYRHDDPEIGAHHLGFLWASLANTIPAMFWAMYYILRHPEAMEALRDEIDSFLQSTGQKKGPGISVHFTREQLDSLVCLESTILEVLRLCSYSSIIREVQEDMNLSLESKSFSLRKGDFVALFPPLIHNDPEIFDAPKEFRFDRFIEDGKKKSTFFKGGKKLKTYVMPFGLGTSKCPGRYFAVNEMKLLLIMLLTYFDLEIIDRKPIGLNHSRMFLGIQHPDSAVSFRYKAKSWRS</sequence>
<dbReference type="EC" id="1.14.14.26" evidence="5"/>
<dbReference type="EC" id="1.14.14.29" evidence="9"/>
<dbReference type="EMBL" id="U36993">
    <property type="protein sequence ID" value="AAA92615.1"/>
    <property type="molecule type" value="mRNA"/>
</dbReference>
<dbReference type="EMBL" id="AK013034">
    <property type="protein sequence ID" value="BAB28613.1"/>
    <property type="molecule type" value="mRNA"/>
</dbReference>
<dbReference type="CCDS" id="CCDS17254.1"/>
<dbReference type="RefSeq" id="NP_031851.3">
    <property type="nucleotide sequence ID" value="NM_007825.5"/>
</dbReference>
<dbReference type="RefSeq" id="XP_006535446.1">
    <property type="nucleotide sequence ID" value="XM_006535383.3"/>
</dbReference>
<dbReference type="SMR" id="Q60991"/>
<dbReference type="BioGRID" id="199039">
    <property type="interactions" value="1"/>
</dbReference>
<dbReference type="FunCoup" id="Q60991">
    <property type="interactions" value="553"/>
</dbReference>
<dbReference type="STRING" id="10090.ENSMUSP00000037487"/>
<dbReference type="SwissLipids" id="SLP:000001208"/>
<dbReference type="iPTMnet" id="Q60991"/>
<dbReference type="PhosphoSitePlus" id="Q60991"/>
<dbReference type="SwissPalm" id="Q60991"/>
<dbReference type="jPOST" id="Q60991"/>
<dbReference type="PaxDb" id="10090-ENSMUSP00000037487"/>
<dbReference type="PeptideAtlas" id="Q60991"/>
<dbReference type="ProteomicsDB" id="283934"/>
<dbReference type="Antibodypedia" id="3058">
    <property type="antibodies" value="299 antibodies from 34 providers"/>
</dbReference>
<dbReference type="DNASU" id="13123"/>
<dbReference type="Ensembl" id="ENSMUST00000035625.7">
    <property type="protein sequence ID" value="ENSMUSP00000037487.7"/>
    <property type="gene ID" value="ENSMUSG00000039519.7"/>
</dbReference>
<dbReference type="GeneID" id="13123"/>
<dbReference type="KEGG" id="mmu:13123"/>
<dbReference type="UCSC" id="uc008orm.2">
    <property type="organism name" value="mouse"/>
</dbReference>
<dbReference type="AGR" id="MGI:104978"/>
<dbReference type="CTD" id="9420"/>
<dbReference type="MGI" id="MGI:104978">
    <property type="gene designation" value="Cyp7b1"/>
</dbReference>
<dbReference type="VEuPathDB" id="HostDB:ENSMUSG00000039519"/>
<dbReference type="eggNOG" id="KOG0684">
    <property type="taxonomic scope" value="Eukaryota"/>
</dbReference>
<dbReference type="GeneTree" id="ENSGT00940000153141"/>
<dbReference type="HOGENOM" id="CLU_018012_1_2_1"/>
<dbReference type="InParanoid" id="Q60991"/>
<dbReference type="OMA" id="WSEVVQM"/>
<dbReference type="OrthoDB" id="6692864at2759"/>
<dbReference type="PhylomeDB" id="Q60991"/>
<dbReference type="TreeFam" id="TF105090"/>
<dbReference type="BRENDA" id="1.14.14.29">
    <property type="organism ID" value="3474"/>
</dbReference>
<dbReference type="Reactome" id="R-MMU-192105">
    <property type="pathway name" value="Synthesis of bile acids and bile salts"/>
</dbReference>
<dbReference type="Reactome" id="R-MMU-193368">
    <property type="pathway name" value="Synthesis of bile acids and bile salts via 7alpha-hydroxycholesterol"/>
</dbReference>
<dbReference type="Reactome" id="R-MMU-193807">
    <property type="pathway name" value="Synthesis of bile acids and bile salts via 27-hydroxycholesterol"/>
</dbReference>
<dbReference type="Reactome" id="R-MMU-211976">
    <property type="pathway name" value="Endogenous sterols"/>
</dbReference>
<dbReference type="SABIO-RK" id="Q60991"/>
<dbReference type="UniPathway" id="UPA00221"/>
<dbReference type="BioGRID-ORCS" id="13123">
    <property type="hits" value="4 hits in 79 CRISPR screens"/>
</dbReference>
<dbReference type="ChiTaRS" id="Cyp7b1">
    <property type="organism name" value="mouse"/>
</dbReference>
<dbReference type="PRO" id="PR:Q60991"/>
<dbReference type="Proteomes" id="UP000000589">
    <property type="component" value="Chromosome 3"/>
</dbReference>
<dbReference type="RNAct" id="Q60991">
    <property type="molecule type" value="protein"/>
</dbReference>
<dbReference type="Bgee" id="ENSMUSG00000039519">
    <property type="expression patterns" value="Expressed in left lobe of liver and 246 other cell types or tissues"/>
</dbReference>
<dbReference type="GO" id="GO:0005789">
    <property type="term" value="C:endoplasmic reticulum membrane"/>
    <property type="evidence" value="ECO:0007669"/>
    <property type="project" value="UniProtKB-SubCell"/>
</dbReference>
<dbReference type="GO" id="GO:0043231">
    <property type="term" value="C:intracellular membrane-bounded organelle"/>
    <property type="evidence" value="ECO:0000304"/>
    <property type="project" value="UniProtKB"/>
</dbReference>
<dbReference type="GO" id="GO:0033782">
    <property type="term" value="F:24S-hydroxycholesterol 7-alpha-hydroxylase activity"/>
    <property type="evidence" value="ECO:0007669"/>
    <property type="project" value="UniProtKB-EC"/>
</dbReference>
<dbReference type="GO" id="GO:0033783">
    <property type="term" value="F:25-hydroxycholesterol 7-alpha-hydroxylase activity"/>
    <property type="evidence" value="ECO:0007669"/>
    <property type="project" value="UniProtKB-EC"/>
</dbReference>
<dbReference type="GO" id="GO:0020037">
    <property type="term" value="F:heme binding"/>
    <property type="evidence" value="ECO:0007669"/>
    <property type="project" value="InterPro"/>
</dbReference>
<dbReference type="GO" id="GO:0005506">
    <property type="term" value="F:iron ion binding"/>
    <property type="evidence" value="ECO:0007669"/>
    <property type="project" value="InterPro"/>
</dbReference>
<dbReference type="GO" id="GO:0035754">
    <property type="term" value="P:B cell chemotaxis"/>
    <property type="evidence" value="ECO:0000315"/>
    <property type="project" value="UniProtKB"/>
</dbReference>
<dbReference type="GO" id="GO:0006699">
    <property type="term" value="P:bile acid biosynthetic process"/>
    <property type="evidence" value="ECO:0000314"/>
    <property type="project" value="UniProtKB"/>
</dbReference>
<dbReference type="GO" id="GO:0008203">
    <property type="term" value="P:cholesterol metabolic process"/>
    <property type="evidence" value="ECO:0007669"/>
    <property type="project" value="UniProtKB-KW"/>
</dbReference>
<dbReference type="GO" id="GO:0007586">
    <property type="term" value="P:digestion"/>
    <property type="evidence" value="ECO:0000304"/>
    <property type="project" value="UniProtKB"/>
</dbReference>
<dbReference type="GO" id="GO:0050673">
    <property type="term" value="P:epithelial cell proliferation"/>
    <property type="evidence" value="ECO:0000315"/>
    <property type="project" value="MGI"/>
</dbReference>
<dbReference type="GO" id="GO:0030520">
    <property type="term" value="P:estrogen receptor signaling pathway"/>
    <property type="evidence" value="ECO:0000315"/>
    <property type="project" value="MGI"/>
</dbReference>
<dbReference type="GO" id="GO:0033147">
    <property type="term" value="P:negative regulation of intracellular estrogen receptor signaling pathway"/>
    <property type="evidence" value="ECO:0000315"/>
    <property type="project" value="MGI"/>
</dbReference>
<dbReference type="GO" id="GO:0050679">
    <property type="term" value="P:positive regulation of epithelial cell proliferation"/>
    <property type="evidence" value="ECO:0000315"/>
    <property type="project" value="MGI"/>
</dbReference>
<dbReference type="GO" id="GO:0060740">
    <property type="term" value="P:prostate gland epithelium morphogenesis"/>
    <property type="evidence" value="ECO:0000315"/>
    <property type="project" value="MGI"/>
</dbReference>
<dbReference type="GO" id="GO:0006694">
    <property type="term" value="P:steroid biosynthetic process"/>
    <property type="evidence" value="ECO:0007669"/>
    <property type="project" value="UniProtKB-KW"/>
</dbReference>
<dbReference type="FunFam" id="1.10.630.10:FF:000065">
    <property type="entry name" value="Cytochrome P450 family 7 subfamily B member 1"/>
    <property type="match status" value="1"/>
</dbReference>
<dbReference type="Gene3D" id="1.10.630.10">
    <property type="entry name" value="Cytochrome P450"/>
    <property type="match status" value="1"/>
</dbReference>
<dbReference type="InterPro" id="IPR050529">
    <property type="entry name" value="CYP450_sterol_14alpha_dmase"/>
</dbReference>
<dbReference type="InterPro" id="IPR001128">
    <property type="entry name" value="Cyt_P450"/>
</dbReference>
<dbReference type="InterPro" id="IPR024204">
    <property type="entry name" value="Cyt_P450_CYP7A1-type"/>
</dbReference>
<dbReference type="InterPro" id="IPR002403">
    <property type="entry name" value="Cyt_P450_E_grp-IV"/>
</dbReference>
<dbReference type="InterPro" id="IPR036396">
    <property type="entry name" value="Cyt_P450_sf"/>
</dbReference>
<dbReference type="PANTHER" id="PTHR24304:SF0">
    <property type="entry name" value="CYTOCHROME P450 7B1"/>
    <property type="match status" value="1"/>
</dbReference>
<dbReference type="PANTHER" id="PTHR24304">
    <property type="entry name" value="CYTOCHROME P450 FAMILY 7"/>
    <property type="match status" value="1"/>
</dbReference>
<dbReference type="Pfam" id="PF00067">
    <property type="entry name" value="p450"/>
    <property type="match status" value="1"/>
</dbReference>
<dbReference type="PIRSF" id="PIRSF000047">
    <property type="entry name" value="Cytochrome_CYPVIIA1"/>
    <property type="match status" value="1"/>
</dbReference>
<dbReference type="PRINTS" id="PR00465">
    <property type="entry name" value="EP450IV"/>
</dbReference>
<dbReference type="SUPFAM" id="SSF48264">
    <property type="entry name" value="Cytochrome P450"/>
    <property type="match status" value="1"/>
</dbReference>
<feature type="chain" id="PRO_0000051907" description="Cytochrome P450 7B1">
    <location>
        <begin position="1"/>
        <end position="507"/>
    </location>
</feature>
<feature type="transmembrane region" description="Helical" evidence="3">
    <location>
        <begin position="14"/>
        <end position="34"/>
    </location>
</feature>
<feature type="transmembrane region" description="Helical" evidence="3">
    <location>
        <begin position="178"/>
        <end position="198"/>
    </location>
</feature>
<feature type="transmembrane region" description="Helical" evidence="3">
    <location>
        <begin position="287"/>
        <end position="307"/>
    </location>
</feature>
<feature type="binding site" description="axial binding residue" evidence="2">
    <location>
        <position position="447"/>
    </location>
    <ligand>
        <name>heme</name>
        <dbReference type="ChEBI" id="CHEBI:30413"/>
    </ligand>
    <ligandPart>
        <name>Fe</name>
        <dbReference type="ChEBI" id="CHEBI:18248"/>
    </ligandPart>
</feature>
<feature type="sequence conflict" description="In Ref. 1; AAA92615." evidence="13" ref="1">
    <original>R</original>
    <variation>S</variation>
    <location>
        <position position="265"/>
    </location>
</feature>
<feature type="sequence conflict" description="In Ref. 1; AAA92615." evidence="13" ref="1">
    <original>P</original>
    <variation>S</variation>
    <location>
        <position position="278"/>
    </location>
</feature>
<feature type="sequence conflict" description="In Ref. 1; AAA92615." evidence="13" ref="1">
    <original>K</original>
    <variation>R</variation>
    <location>
        <position position="432"/>
    </location>
</feature>
<feature type="sequence conflict" description="In Ref. 1; AAA92615." evidence="13" ref="1">
    <original>M</original>
    <variation>E</variation>
    <location>
        <position position="463"/>
    </location>
</feature>
<name>CP7B1_MOUSE</name>
<comment type="function">
    <text evidence="1 4 5 6 8 9">A cytochrome P450 monooxygenase involved in the metabolism of endogenous oxysterols and steroid hormones, including neurosteroids (PubMed:10748047, PubMed:11067870, PubMed:9144166, PubMed:9295351). Mechanistically, uses molecular oxygen inserting one oxygen atom into a substrate, and reducing the second into a water molecule, with two electrons provided by NADPH via cytochrome P450 reductase (CPR; NADPH-ferrihemoprotein reductase). Catalyzes the hydroxylation of carbon hydrogen bonds of steroids with a preference for 7-alpha position. Usually metabolizes steroids carrying a hydroxy group at position 3, functioning as a 3-hydroxy steroid 7-alpha hydroxylase (PubMed:10748047, PubMed:11067870, PubMed:9144166, PubMed:9295351). Hydroxylates oxysterols, including 25-hydroxycholesterol and (25R)-cholest-5-ene-3beta,26-diol toward 7-alpha hydroxy derivatives, which may be transported to the liver and converted to bile acids (PubMed:10748047, PubMed:11067870, PubMed:9144166, PubMed:9295351). Via its product 7-alpha,25-dihydroxycholesterol, a ligand for the chemotactic G protein-coupled receptor GPR183/EBI2, regulates B cell migration in germinal centers of lymphoid organs, thus guiding efficient maturation of plasma B cells and overall antigen-specific humoral immune response (PubMed:22999953). 7-alpha hydroxylates neurosteroids, including 3beta-hydroxyandrost-5-en-17-one (dehydroepiandrosterone) and pregnenolone, both involved in hippocampus-associated memory and learning (PubMed:9144166). Metabolizes androstanoids toward 6- or 7-alpha hydroxy derivatives (By similarity).</text>
</comment>
<comment type="catalytic activity">
    <reaction evidence="4 5 8 9">
        <text>25-hydroxycholesterol + reduced [NADPH--hemoprotein reductase] + O2 = 7alpha,25-dihydroxycholesterol + oxidized [NADPH--hemoprotein reductase] + H2O + H(+)</text>
        <dbReference type="Rhea" id="RHEA:24308"/>
        <dbReference type="Rhea" id="RHEA-COMP:11964"/>
        <dbReference type="Rhea" id="RHEA-COMP:11965"/>
        <dbReference type="ChEBI" id="CHEBI:15377"/>
        <dbReference type="ChEBI" id="CHEBI:15378"/>
        <dbReference type="ChEBI" id="CHEBI:15379"/>
        <dbReference type="ChEBI" id="CHEBI:37623"/>
        <dbReference type="ChEBI" id="CHEBI:42977"/>
        <dbReference type="ChEBI" id="CHEBI:57618"/>
        <dbReference type="ChEBI" id="CHEBI:58210"/>
        <dbReference type="EC" id="1.14.14.29"/>
    </reaction>
    <physiologicalReaction direction="left-to-right" evidence="17">
        <dbReference type="Rhea" id="RHEA:24309"/>
    </physiologicalReaction>
</comment>
<comment type="catalytic activity">
    <reaction evidence="4 5 9">
        <text>(25R)-cholest-5-ene-3beta,26-diol + reduced [NADPH--hemoprotein reductase] + O2 = (25R)-cholest-5-en-3beta,7alpha,26-triol + oxidized [NADPH--hemoprotein reductase] + H2O + H(+)</text>
        <dbReference type="Rhea" id="RHEA:19041"/>
        <dbReference type="Rhea" id="RHEA-COMP:11964"/>
        <dbReference type="Rhea" id="RHEA-COMP:11965"/>
        <dbReference type="ChEBI" id="CHEBI:15377"/>
        <dbReference type="ChEBI" id="CHEBI:15378"/>
        <dbReference type="ChEBI" id="CHEBI:15379"/>
        <dbReference type="ChEBI" id="CHEBI:57618"/>
        <dbReference type="ChEBI" id="CHEBI:58210"/>
        <dbReference type="ChEBI" id="CHEBI:76591"/>
        <dbReference type="ChEBI" id="CHEBI:76592"/>
        <dbReference type="EC" id="1.14.14.29"/>
    </reaction>
    <physiologicalReaction direction="left-to-right" evidence="17">
        <dbReference type="Rhea" id="RHEA:19042"/>
    </physiologicalReaction>
</comment>
<comment type="catalytic activity">
    <reaction evidence="5">
        <text>(24S)-hydroxycholesterol + reduced [NADPH--hemoprotein reductase] + O2 = (24S)-7alpha-dihydroxycholesterol + oxidized [NADPH--hemoprotein reductase] + H2O + H(+)</text>
        <dbReference type="Rhea" id="RHEA:46124"/>
        <dbReference type="Rhea" id="RHEA-COMP:11964"/>
        <dbReference type="Rhea" id="RHEA-COMP:11965"/>
        <dbReference type="ChEBI" id="CHEBI:15377"/>
        <dbReference type="ChEBI" id="CHEBI:15378"/>
        <dbReference type="ChEBI" id="CHEBI:15379"/>
        <dbReference type="ChEBI" id="CHEBI:34310"/>
        <dbReference type="ChEBI" id="CHEBI:37640"/>
        <dbReference type="ChEBI" id="CHEBI:57618"/>
        <dbReference type="ChEBI" id="CHEBI:58210"/>
        <dbReference type="EC" id="1.14.14.26"/>
    </reaction>
    <physiologicalReaction direction="left-to-right" evidence="15">
        <dbReference type="Rhea" id="RHEA:46125"/>
    </physiologicalReaction>
</comment>
<comment type="catalytic activity">
    <reaction evidence="4">
        <text>(24S)-25-epoxycholesterol + reduced [NADPH--hemoprotein reductase] + O2 = (24S,25)-epoxy-7alpha-hydroxycholesterol + oxidized [NADPH--hemoprotein reductase] + H2O + H(+)</text>
        <dbReference type="Rhea" id="RHEA:46464"/>
        <dbReference type="Rhea" id="RHEA-COMP:11964"/>
        <dbReference type="Rhea" id="RHEA-COMP:11965"/>
        <dbReference type="ChEBI" id="CHEBI:15377"/>
        <dbReference type="ChEBI" id="CHEBI:15378"/>
        <dbReference type="ChEBI" id="CHEBI:15379"/>
        <dbReference type="ChEBI" id="CHEBI:41633"/>
        <dbReference type="ChEBI" id="CHEBI:57618"/>
        <dbReference type="ChEBI" id="CHEBI:58210"/>
        <dbReference type="ChEBI" id="CHEBI:86146"/>
    </reaction>
    <physiologicalReaction direction="left-to-right" evidence="14">
        <dbReference type="Rhea" id="RHEA:46465"/>
    </physiologicalReaction>
</comment>
<comment type="catalytic activity">
    <reaction evidence="4">
        <text>(22R)-hydroxycholesterol + reduced [NADPH--hemoprotein reductase] + O2 = (22R,7alpha)-dihydroxycholesterol + oxidized [NADPH--hemoprotein reductase] + H2O + H(+)</text>
        <dbReference type="Rhea" id="RHEA:46460"/>
        <dbReference type="Rhea" id="RHEA-COMP:11964"/>
        <dbReference type="Rhea" id="RHEA-COMP:11965"/>
        <dbReference type="ChEBI" id="CHEBI:15377"/>
        <dbReference type="ChEBI" id="CHEBI:15378"/>
        <dbReference type="ChEBI" id="CHEBI:15379"/>
        <dbReference type="ChEBI" id="CHEBI:57618"/>
        <dbReference type="ChEBI" id="CHEBI:58210"/>
        <dbReference type="ChEBI" id="CHEBI:67237"/>
        <dbReference type="ChEBI" id="CHEBI:86145"/>
    </reaction>
    <physiologicalReaction direction="left-to-right" evidence="14">
        <dbReference type="Rhea" id="RHEA:46461"/>
    </physiologicalReaction>
</comment>
<comment type="catalytic activity">
    <reaction evidence="1">
        <text>androst-5-en-3beta,17beta-diol + reduced [NADPH--hemoprotein reductase] + O2 = androst-5-en-3beta,7alpha,17beta-triol + oxidized [NADPH--hemoprotein reductase] + H2O + H(+)</text>
        <dbReference type="Rhea" id="RHEA:46204"/>
        <dbReference type="Rhea" id="RHEA-COMP:11964"/>
        <dbReference type="Rhea" id="RHEA-COMP:11965"/>
        <dbReference type="ChEBI" id="CHEBI:2710"/>
        <dbReference type="ChEBI" id="CHEBI:15377"/>
        <dbReference type="ChEBI" id="CHEBI:15378"/>
        <dbReference type="ChEBI" id="CHEBI:15379"/>
        <dbReference type="ChEBI" id="CHEBI:57618"/>
        <dbReference type="ChEBI" id="CHEBI:58210"/>
        <dbReference type="ChEBI" id="CHEBI:85810"/>
    </reaction>
    <physiologicalReaction direction="left-to-right" evidence="1">
        <dbReference type="Rhea" id="RHEA:46205"/>
    </physiologicalReaction>
</comment>
<comment type="catalytic activity">
    <reaction evidence="1">
        <text>5alpha-androstane-3beta,17beta-diol + reduced [NADPH--hemoprotein reductase] + O2 = 5alpha-androstane-3beta,6alpha,17beta-triol + oxidized [NADPH--hemoprotein reductase] + H2O + H(+)</text>
        <dbReference type="Rhea" id="RHEA:46200"/>
        <dbReference type="Rhea" id="RHEA-COMP:11964"/>
        <dbReference type="Rhea" id="RHEA-COMP:11965"/>
        <dbReference type="ChEBI" id="CHEBI:15377"/>
        <dbReference type="ChEBI" id="CHEBI:15378"/>
        <dbReference type="ChEBI" id="CHEBI:15379"/>
        <dbReference type="ChEBI" id="CHEBI:18329"/>
        <dbReference type="ChEBI" id="CHEBI:57618"/>
        <dbReference type="ChEBI" id="CHEBI:58210"/>
        <dbReference type="ChEBI" id="CHEBI:85809"/>
    </reaction>
    <physiologicalReaction direction="left-to-right" evidence="1">
        <dbReference type="Rhea" id="RHEA:46201"/>
    </physiologicalReaction>
</comment>
<comment type="catalytic activity">
    <reaction evidence="8">
        <text>3beta-hydroxyandrost-5-en-17-one + reduced [NADPH--hemoprotein reductase] + O2 = 3beta,7alpha-dihydroxyandrost-5-en-17-one + oxidized [NADPH--hemoprotein reductase] + H2O + H(+)</text>
        <dbReference type="Rhea" id="RHEA:46192"/>
        <dbReference type="Rhea" id="RHEA-COMP:11964"/>
        <dbReference type="Rhea" id="RHEA-COMP:11965"/>
        <dbReference type="ChEBI" id="CHEBI:15377"/>
        <dbReference type="ChEBI" id="CHEBI:15378"/>
        <dbReference type="ChEBI" id="CHEBI:15379"/>
        <dbReference type="ChEBI" id="CHEBI:28689"/>
        <dbReference type="ChEBI" id="CHEBI:57618"/>
        <dbReference type="ChEBI" id="CHEBI:58210"/>
        <dbReference type="ChEBI" id="CHEBI:81471"/>
    </reaction>
    <physiologicalReaction direction="left-to-right" evidence="16">
        <dbReference type="Rhea" id="RHEA:46193"/>
    </physiologicalReaction>
</comment>
<comment type="catalytic activity">
    <reaction evidence="1">
        <text>3beta-hydroxy-5alpha-androstan-17-one + reduced [NADPH--hemoprotein reductase] + O2 = 3beta,7alpha-dihydroxy-5alpha-androstan-17-one + oxidized [NADPH--hemoprotein reductase] + H2O + H(+)</text>
        <dbReference type="Rhea" id="RHEA:43896"/>
        <dbReference type="Rhea" id="RHEA-COMP:11964"/>
        <dbReference type="Rhea" id="RHEA-COMP:11965"/>
        <dbReference type="ChEBI" id="CHEBI:15377"/>
        <dbReference type="ChEBI" id="CHEBI:15378"/>
        <dbReference type="ChEBI" id="CHEBI:15379"/>
        <dbReference type="ChEBI" id="CHEBI:57618"/>
        <dbReference type="ChEBI" id="CHEBI:58210"/>
        <dbReference type="ChEBI" id="CHEBI:85816"/>
        <dbReference type="ChEBI" id="CHEBI:541975"/>
    </reaction>
    <physiologicalReaction direction="left-to-right" evidence="1">
        <dbReference type="Rhea" id="RHEA:43897"/>
    </physiologicalReaction>
</comment>
<comment type="catalytic activity">
    <reaction evidence="8">
        <text>pregnenolone + reduced [NADPH--hemoprotein reductase] + O2 = 7alpha-hydroxypregnenolone + oxidized [NADPH--hemoprotein reductase] + H2O + H(+)</text>
        <dbReference type="Rhea" id="RHEA:46196"/>
        <dbReference type="Rhea" id="RHEA-COMP:11964"/>
        <dbReference type="Rhea" id="RHEA-COMP:11965"/>
        <dbReference type="ChEBI" id="CHEBI:15377"/>
        <dbReference type="ChEBI" id="CHEBI:15378"/>
        <dbReference type="ChEBI" id="CHEBI:15379"/>
        <dbReference type="ChEBI" id="CHEBI:16581"/>
        <dbReference type="ChEBI" id="CHEBI:57618"/>
        <dbReference type="ChEBI" id="CHEBI:58210"/>
        <dbReference type="ChEBI" id="CHEBI:81467"/>
    </reaction>
    <physiologicalReaction direction="left-to-right" evidence="16">
        <dbReference type="Rhea" id="RHEA:46197"/>
    </physiologicalReaction>
</comment>
<comment type="cofactor">
    <cofactor evidence="2">
        <name>heme</name>
        <dbReference type="ChEBI" id="CHEBI:30413"/>
    </cofactor>
</comment>
<comment type="activity regulation">
    <text evidence="1">Inhibited by drugs voriconazole and metyrapone.</text>
</comment>
<comment type="biophysicochemical properties">
    <kinetics>
        <KM evidence="8">13.6 uM for 3beta-hydroxyandrost-5-en-17-one (dehydroepiandrosterone)</KM>
        <KM evidence="8">4 uM for pregnenolone</KM>
    </kinetics>
</comment>
<comment type="pathway">
    <text evidence="4 5 8 9">Lipid metabolism; bile acid biosynthesis.</text>
</comment>
<comment type="pathway">
    <text evidence="8">Steroid hormone biosynthesis.</text>
</comment>
<comment type="subcellular location">
    <subcellularLocation>
        <location evidence="1">Endoplasmic reticulum membrane</location>
        <topology evidence="13">Multi-pass membrane protein</topology>
    </subcellularLocation>
    <subcellularLocation>
        <location evidence="1">Microsome membrane</location>
        <topology evidence="13">Multi-pass membrane protein</topology>
    </subcellularLocation>
</comment>
<comment type="tissue specificity">
    <text evidence="6 7">Highly expressed in brain structures including the corpus callosum, the anterior commissure and fornix (PubMed:8530364). The hippocampal expression is particularly prominent in the dentate gyrus (PubMed:8530364). Expressed in liver and kidney. The hepatic expression is sexually dimorphic, predominantly detected in male liver while barely detectable in females (PubMed:8530364). Expressed in lymph nodes and spleens, in both lymphoid and stromal compartments (PubMed:22999953). Higher expression is detected in fibroblastic reticular cells, a type of stromal cells in the lymph nodes (PubMed:22999953). Also expressed at high levels in the outer follicle and at the B cell-T cell boundary of splenic germinal centers (PubMed:22999953). Expressed in dendritic cells (DCs) subpopulations being most abundant in CD8-positive DCs (PubMed:22999953).</text>
</comment>
<comment type="disruption phenotype">
    <text evidence="6">Knockout mice exhibit impaired generation of plasma cells and overall deficient antigen-specific humoral immune response.</text>
</comment>
<comment type="similarity">
    <text evidence="13">Belongs to the cytochrome P450 family.</text>
</comment>
<organism>
    <name type="scientific">Mus musculus</name>
    <name type="common">Mouse</name>
    <dbReference type="NCBI Taxonomy" id="10090"/>
    <lineage>
        <taxon>Eukaryota</taxon>
        <taxon>Metazoa</taxon>
        <taxon>Chordata</taxon>
        <taxon>Craniata</taxon>
        <taxon>Vertebrata</taxon>
        <taxon>Euteleostomi</taxon>
        <taxon>Mammalia</taxon>
        <taxon>Eutheria</taxon>
        <taxon>Euarchontoglires</taxon>
        <taxon>Glires</taxon>
        <taxon>Rodentia</taxon>
        <taxon>Myomorpha</taxon>
        <taxon>Muroidea</taxon>
        <taxon>Muridae</taxon>
        <taxon>Murinae</taxon>
        <taxon>Mus</taxon>
        <taxon>Mus</taxon>
    </lineage>
</organism>
<reference key="1">
    <citation type="journal article" date="1995" name="J. Biol. Chem.">
        <title>A novel cytochrome P450 expressed primarily in brain.</title>
        <authorList>
            <person name="Stapleton G."/>
            <person name="Steel M."/>
            <person name="Richardson M."/>
            <person name="Mason J.O."/>
            <person name="Rose K.A."/>
            <person name="Morris R.G."/>
            <person name="Lathe R."/>
        </authorList>
    </citation>
    <scope>NUCLEOTIDE SEQUENCE [MRNA]</scope>
    <scope>TISSUE SPECIFICITY</scope>
    <source>
        <tissue>Brain</tissue>
        <tissue>Liver</tissue>
    </source>
</reference>
<reference key="2">
    <citation type="journal article" date="2005" name="Science">
        <title>The transcriptional landscape of the mammalian genome.</title>
        <authorList>
            <person name="Carninci P."/>
            <person name="Kasukawa T."/>
            <person name="Katayama S."/>
            <person name="Gough J."/>
            <person name="Frith M.C."/>
            <person name="Maeda N."/>
            <person name="Oyama R."/>
            <person name="Ravasi T."/>
            <person name="Lenhard B."/>
            <person name="Wells C."/>
            <person name="Kodzius R."/>
            <person name="Shimokawa K."/>
            <person name="Bajic V.B."/>
            <person name="Brenner S.E."/>
            <person name="Batalov S."/>
            <person name="Forrest A.R."/>
            <person name="Zavolan M."/>
            <person name="Davis M.J."/>
            <person name="Wilming L.G."/>
            <person name="Aidinis V."/>
            <person name="Allen J.E."/>
            <person name="Ambesi-Impiombato A."/>
            <person name="Apweiler R."/>
            <person name="Aturaliya R.N."/>
            <person name="Bailey T.L."/>
            <person name="Bansal M."/>
            <person name="Baxter L."/>
            <person name="Beisel K.W."/>
            <person name="Bersano T."/>
            <person name="Bono H."/>
            <person name="Chalk A.M."/>
            <person name="Chiu K.P."/>
            <person name="Choudhary V."/>
            <person name="Christoffels A."/>
            <person name="Clutterbuck D.R."/>
            <person name="Crowe M.L."/>
            <person name="Dalla E."/>
            <person name="Dalrymple B.P."/>
            <person name="de Bono B."/>
            <person name="Della Gatta G."/>
            <person name="di Bernardo D."/>
            <person name="Down T."/>
            <person name="Engstrom P."/>
            <person name="Fagiolini M."/>
            <person name="Faulkner G."/>
            <person name="Fletcher C.F."/>
            <person name="Fukushima T."/>
            <person name="Furuno M."/>
            <person name="Futaki S."/>
            <person name="Gariboldi M."/>
            <person name="Georgii-Hemming P."/>
            <person name="Gingeras T.R."/>
            <person name="Gojobori T."/>
            <person name="Green R.E."/>
            <person name="Gustincich S."/>
            <person name="Harbers M."/>
            <person name="Hayashi Y."/>
            <person name="Hensch T.K."/>
            <person name="Hirokawa N."/>
            <person name="Hill D."/>
            <person name="Huminiecki L."/>
            <person name="Iacono M."/>
            <person name="Ikeo K."/>
            <person name="Iwama A."/>
            <person name="Ishikawa T."/>
            <person name="Jakt M."/>
            <person name="Kanapin A."/>
            <person name="Katoh M."/>
            <person name="Kawasawa Y."/>
            <person name="Kelso J."/>
            <person name="Kitamura H."/>
            <person name="Kitano H."/>
            <person name="Kollias G."/>
            <person name="Krishnan S.P."/>
            <person name="Kruger A."/>
            <person name="Kummerfeld S.K."/>
            <person name="Kurochkin I.V."/>
            <person name="Lareau L.F."/>
            <person name="Lazarevic D."/>
            <person name="Lipovich L."/>
            <person name="Liu J."/>
            <person name="Liuni S."/>
            <person name="McWilliam S."/>
            <person name="Madan Babu M."/>
            <person name="Madera M."/>
            <person name="Marchionni L."/>
            <person name="Matsuda H."/>
            <person name="Matsuzawa S."/>
            <person name="Miki H."/>
            <person name="Mignone F."/>
            <person name="Miyake S."/>
            <person name="Morris K."/>
            <person name="Mottagui-Tabar S."/>
            <person name="Mulder N."/>
            <person name="Nakano N."/>
            <person name="Nakauchi H."/>
            <person name="Ng P."/>
            <person name="Nilsson R."/>
            <person name="Nishiguchi S."/>
            <person name="Nishikawa S."/>
            <person name="Nori F."/>
            <person name="Ohara O."/>
            <person name="Okazaki Y."/>
            <person name="Orlando V."/>
            <person name="Pang K.C."/>
            <person name="Pavan W.J."/>
            <person name="Pavesi G."/>
            <person name="Pesole G."/>
            <person name="Petrovsky N."/>
            <person name="Piazza S."/>
            <person name="Reed J."/>
            <person name="Reid J.F."/>
            <person name="Ring B.Z."/>
            <person name="Ringwald M."/>
            <person name="Rost B."/>
            <person name="Ruan Y."/>
            <person name="Salzberg S.L."/>
            <person name="Sandelin A."/>
            <person name="Schneider C."/>
            <person name="Schoenbach C."/>
            <person name="Sekiguchi K."/>
            <person name="Semple C.A."/>
            <person name="Seno S."/>
            <person name="Sessa L."/>
            <person name="Sheng Y."/>
            <person name="Shibata Y."/>
            <person name="Shimada H."/>
            <person name="Shimada K."/>
            <person name="Silva D."/>
            <person name="Sinclair B."/>
            <person name="Sperling S."/>
            <person name="Stupka E."/>
            <person name="Sugiura K."/>
            <person name="Sultana R."/>
            <person name="Takenaka Y."/>
            <person name="Taki K."/>
            <person name="Tammoja K."/>
            <person name="Tan S.L."/>
            <person name="Tang S."/>
            <person name="Taylor M.S."/>
            <person name="Tegner J."/>
            <person name="Teichmann S.A."/>
            <person name="Ueda H.R."/>
            <person name="van Nimwegen E."/>
            <person name="Verardo R."/>
            <person name="Wei C.L."/>
            <person name="Yagi K."/>
            <person name="Yamanishi H."/>
            <person name="Zabarovsky E."/>
            <person name="Zhu S."/>
            <person name="Zimmer A."/>
            <person name="Hide W."/>
            <person name="Bult C."/>
            <person name="Grimmond S.M."/>
            <person name="Teasdale R.D."/>
            <person name="Liu E.T."/>
            <person name="Brusic V."/>
            <person name="Quackenbush J."/>
            <person name="Wahlestedt C."/>
            <person name="Mattick J.S."/>
            <person name="Hume D.A."/>
            <person name="Kai C."/>
            <person name="Sasaki D."/>
            <person name="Tomaru Y."/>
            <person name="Fukuda S."/>
            <person name="Kanamori-Katayama M."/>
            <person name="Suzuki M."/>
            <person name="Aoki J."/>
            <person name="Arakawa T."/>
            <person name="Iida J."/>
            <person name="Imamura K."/>
            <person name="Itoh M."/>
            <person name="Kato T."/>
            <person name="Kawaji H."/>
            <person name="Kawagashira N."/>
            <person name="Kawashima T."/>
            <person name="Kojima M."/>
            <person name="Kondo S."/>
            <person name="Konno H."/>
            <person name="Nakano K."/>
            <person name="Ninomiya N."/>
            <person name="Nishio T."/>
            <person name="Okada M."/>
            <person name="Plessy C."/>
            <person name="Shibata K."/>
            <person name="Shiraki T."/>
            <person name="Suzuki S."/>
            <person name="Tagami M."/>
            <person name="Waki K."/>
            <person name="Watahiki A."/>
            <person name="Okamura-Oho Y."/>
            <person name="Suzuki H."/>
            <person name="Kawai J."/>
            <person name="Hayashizaki Y."/>
        </authorList>
    </citation>
    <scope>NUCLEOTIDE SEQUENCE [LARGE SCALE MRNA]</scope>
    <source>
        <strain>C57BL/6J</strain>
        <tissue>Embryo</tissue>
    </source>
</reference>
<reference key="3">
    <citation type="journal article" date="1997" name="J. Biol. Chem.">
        <title>Identification and characterization of a mouse oxysterol 7alpha-hydroxylase cDNA.</title>
        <authorList>
            <person name="Schwarz M."/>
            <person name="Lund E.G."/>
            <person name="Lathe R."/>
            <person name="Bjoerkhem I."/>
            <person name="Russell D.W."/>
        </authorList>
    </citation>
    <scope>FUNCTION</scope>
    <scope>CATALYTIC ACTIVITY</scope>
    <scope>PATHWAY</scope>
</reference>
<reference key="4">
    <citation type="journal article" date="1997" name="Proc. Natl. Acad. Sci. U.S.A.">
        <title>Cyp7b, a novel brain cytochrome P450, catalyzes the synthesis of neurosteroids 7alpha-hydroxy dehydroepiandrosterone and 7alpha-hydroxy pregnenolone.</title>
        <authorList>
            <person name="Rose K.A."/>
            <person name="Stapleton G."/>
            <person name="Dott K."/>
            <person name="Kieny M.P."/>
            <person name="Best R."/>
            <person name="Schwarz M."/>
            <person name="Russell D.W."/>
            <person name="Bjoerkhem I."/>
            <person name="Seckl J."/>
            <person name="Lathe R."/>
        </authorList>
    </citation>
    <scope>FUNCTION</scope>
    <scope>CATALYTIC ACTIVITY</scope>
    <scope>BIOPHYSICOCHEMICAL PROPERTIES</scope>
    <scope>PATHWAY</scope>
</reference>
<reference key="5">
    <citation type="journal article" date="2000" name="J. Biol. Chem.">
        <title>Expression cloning of an oxysterol 7alpha-hydroxylase selective for 24-hydroxycholesterol.</title>
        <authorList>
            <person name="Li-Hawkins J."/>
            <person name="Lund E.G."/>
            <person name="Bronson A.D."/>
            <person name="Russell D.W."/>
        </authorList>
    </citation>
    <scope>FUNCTION</scope>
    <scope>CATALYTIC ACTIVITY</scope>
    <scope>PATHWAY</scope>
</reference>
<reference key="6">
    <citation type="journal article" date="2000" name="J. Clin. Invest.">
        <title>The bile acid synthetic gene 3beta-hydroxy-delta(5)-C(27)-steroid oxidoreductase is mutated in progressive intrahepatic cholestasis.</title>
        <authorList>
            <person name="Schwarz M."/>
            <person name="Wright A.C."/>
            <person name="Davis D.L."/>
            <person name="Nazer H."/>
            <person name="Bjorkhem I."/>
            <person name="Russell D.W."/>
        </authorList>
    </citation>
    <scope>FUNCTION</scope>
    <scope>CATALYTIC ACTIVITY</scope>
    <scope>PATHWAY</scope>
</reference>
<reference key="7">
    <citation type="journal article" date="2012" name="Immunity">
        <title>Oxysterol gradient generation by lymphoid stromal cells guides activated B cell movement during humoral responses.</title>
        <authorList>
            <person name="Yi T."/>
            <person name="Wang X."/>
            <person name="Kelly L.M."/>
            <person name="An J."/>
            <person name="Xu Y."/>
            <person name="Sailer A.W."/>
            <person name="Gustafsson J.A."/>
            <person name="Russell D.W."/>
            <person name="Cyster J.G."/>
        </authorList>
    </citation>
    <scope>FUNCTION</scope>
    <scope>TISSUE SPECIFICITY</scope>
    <scope>DISRUPTION PHENOTYPE</scope>
</reference>
<gene>
    <name evidence="10 18" type="primary">Cyp7b1</name>
</gene>
<evidence type="ECO:0000250" key="1">
    <source>
        <dbReference type="UniProtKB" id="O75881"/>
    </source>
</evidence>
<evidence type="ECO:0000250" key="2">
    <source>
        <dbReference type="UniProtKB" id="P22680"/>
    </source>
</evidence>
<evidence type="ECO:0000255" key="3"/>
<evidence type="ECO:0000269" key="4">
    <source>
    </source>
</evidence>
<evidence type="ECO:0000269" key="5">
    <source>
    </source>
</evidence>
<evidence type="ECO:0000269" key="6">
    <source>
    </source>
</evidence>
<evidence type="ECO:0000269" key="7">
    <source>
    </source>
</evidence>
<evidence type="ECO:0000269" key="8">
    <source>
    </source>
</evidence>
<evidence type="ECO:0000269" key="9">
    <source>
    </source>
</evidence>
<evidence type="ECO:0000303" key="10">
    <source>
    </source>
</evidence>
<evidence type="ECO:0000303" key="11">
    <source>
    </source>
</evidence>
<evidence type="ECO:0000303" key="12">
    <source>
    </source>
</evidence>
<evidence type="ECO:0000305" key="13"/>
<evidence type="ECO:0000305" key="14">
    <source>
    </source>
</evidence>
<evidence type="ECO:0000305" key="15">
    <source>
    </source>
</evidence>
<evidence type="ECO:0000305" key="16">
    <source>
    </source>
</evidence>
<evidence type="ECO:0000305" key="17">
    <source>
    </source>
</evidence>
<evidence type="ECO:0000312" key="18">
    <source>
        <dbReference type="MGI" id="MGI:104978"/>
    </source>
</evidence>
<keyword id="KW-0153">Cholesterol metabolism</keyword>
<keyword id="KW-0256">Endoplasmic reticulum</keyword>
<keyword id="KW-0349">Heme</keyword>
<keyword id="KW-0408">Iron</keyword>
<keyword id="KW-0444">Lipid biosynthesis</keyword>
<keyword id="KW-0443">Lipid metabolism</keyword>
<keyword id="KW-0472">Membrane</keyword>
<keyword id="KW-0479">Metal-binding</keyword>
<keyword id="KW-0492">Microsome</keyword>
<keyword id="KW-0503">Monooxygenase</keyword>
<keyword id="KW-0560">Oxidoreductase</keyword>
<keyword id="KW-1185">Reference proteome</keyword>
<keyword id="KW-0752">Steroid biosynthesis</keyword>
<keyword id="KW-0753">Steroid metabolism</keyword>
<keyword id="KW-1207">Sterol metabolism</keyword>
<keyword id="KW-0812">Transmembrane</keyword>
<keyword id="KW-1133">Transmembrane helix</keyword>
<proteinExistence type="evidence at protein level"/>
<accession>Q60991</accession>
<accession>Q9CZ39</accession>
<protein>
    <recommendedName>
        <fullName>Cytochrome P450 7B1</fullName>
    </recommendedName>
    <alternativeName>
        <fullName evidence="15">24-hydroxycholesterol 7-alpha-hydroxylase</fullName>
        <ecNumber evidence="5">1.14.14.26</ecNumber>
    </alternativeName>
    <alternativeName>
        <fullName evidence="17">25/26-hydroxycholesterol 7-alpha-hydroxylase</fullName>
        <ecNumber evidence="9">1.14.14.29</ecNumber>
    </alternativeName>
    <alternativeName>
        <fullName>3-hydroxysteroid 7-alpha hydroxylase</fullName>
    </alternativeName>
    <alternativeName>
        <fullName evidence="11">Hippocampal transcript 1 protein</fullName>
        <shortName evidence="11">HCT-1</shortName>
    </alternativeName>
    <alternativeName>
        <fullName evidence="12">Oxysterol 7-alpha-hydroxylase</fullName>
    </alternativeName>
</protein>